<organism>
    <name type="scientific">Rhodococcus opacus (strain B4)</name>
    <dbReference type="NCBI Taxonomy" id="632772"/>
    <lineage>
        <taxon>Bacteria</taxon>
        <taxon>Bacillati</taxon>
        <taxon>Actinomycetota</taxon>
        <taxon>Actinomycetes</taxon>
        <taxon>Mycobacteriales</taxon>
        <taxon>Nocardiaceae</taxon>
        <taxon>Rhodococcus</taxon>
    </lineage>
</organism>
<proteinExistence type="inferred from homology"/>
<reference key="1">
    <citation type="submission" date="2009-03" db="EMBL/GenBank/DDBJ databases">
        <title>Comparison of the complete genome sequences of Rhodococcus erythropolis PR4 and Rhodococcus opacus B4.</title>
        <authorList>
            <person name="Takarada H."/>
            <person name="Sekine M."/>
            <person name="Hosoyama A."/>
            <person name="Yamada R."/>
            <person name="Fujisawa T."/>
            <person name="Omata S."/>
            <person name="Shimizu A."/>
            <person name="Tsukatani N."/>
            <person name="Tanikawa S."/>
            <person name="Fujita N."/>
            <person name="Harayama S."/>
        </authorList>
    </citation>
    <scope>NUCLEOTIDE SEQUENCE [LARGE SCALE GENOMIC DNA]</scope>
    <source>
        <strain>B4</strain>
    </source>
</reference>
<evidence type="ECO:0000255" key="1">
    <source>
        <dbReference type="HAMAP-Rule" id="MF_00275"/>
    </source>
</evidence>
<keyword id="KW-1003">Cell membrane</keyword>
<keyword id="KW-0406">Ion transport</keyword>
<keyword id="KW-0472">Membrane</keyword>
<keyword id="KW-0630">Potassium</keyword>
<keyword id="KW-0633">Potassium transport</keyword>
<keyword id="KW-0812">Transmembrane</keyword>
<keyword id="KW-1133">Transmembrane helix</keyword>
<keyword id="KW-0813">Transport</keyword>
<gene>
    <name evidence="1" type="primary">kdpA</name>
    <name type="ordered locus">ROP_09550</name>
</gene>
<feature type="chain" id="PRO_1000190744" description="Potassium-transporting ATPase potassium-binding subunit">
    <location>
        <begin position="1"/>
        <end position="561"/>
    </location>
</feature>
<feature type="transmembrane region" description="Helical" evidence="1">
    <location>
        <begin position="5"/>
        <end position="25"/>
    </location>
</feature>
<feature type="transmembrane region" description="Helical" evidence="1">
    <location>
        <begin position="60"/>
        <end position="80"/>
    </location>
</feature>
<feature type="transmembrane region" description="Helical" evidence="1">
    <location>
        <begin position="86"/>
        <end position="106"/>
    </location>
</feature>
<feature type="transmembrane region" description="Helical" evidence="1">
    <location>
        <begin position="131"/>
        <end position="151"/>
    </location>
</feature>
<feature type="transmembrane region" description="Helical" evidence="1">
    <location>
        <begin position="177"/>
        <end position="197"/>
    </location>
</feature>
<feature type="transmembrane region" description="Helical" evidence="1">
    <location>
        <begin position="247"/>
        <end position="267"/>
    </location>
</feature>
<feature type="transmembrane region" description="Helical" evidence="1">
    <location>
        <begin position="281"/>
        <end position="301"/>
    </location>
</feature>
<feature type="transmembrane region" description="Helical" evidence="1">
    <location>
        <begin position="324"/>
        <end position="344"/>
    </location>
</feature>
<feature type="transmembrane region" description="Helical" evidence="1">
    <location>
        <begin position="376"/>
        <end position="396"/>
    </location>
</feature>
<feature type="transmembrane region" description="Helical" evidence="1">
    <location>
        <begin position="415"/>
        <end position="435"/>
    </location>
</feature>
<feature type="transmembrane region" description="Helical" evidence="1">
    <location>
        <begin position="488"/>
        <end position="508"/>
    </location>
</feature>
<feature type="transmembrane region" description="Helical" evidence="1">
    <location>
        <begin position="537"/>
        <end position="557"/>
    </location>
</feature>
<sequence length="561" mass="57687">MTPALAAGLQVVFVLAVLAVAYVPVGDYMARVYESRRHLRVESVLYRLCRIDPHAEQTWYGYAGSVLGFSAASVLFLYALQRIQGVLPLSGDLSGVSPAVAFNTAVSFVTNTNWQSYAPETTMSNLTQPVGLAVQNFVSAAVGMAVAVALIRGFVRVSRGGEIGNFWVDLTRGSLRILLPFSFVIALILLSQGVIQSFHPGFASTGLDGNSVTNALAPVASQEAIKELGTNGGGILAANSAHPFENPTPVSNIVEILAILLIPVSLTRTFGTMVGERKQGLTLLAVMGILWGSLLAVTLAAESGRRGVAATAAGAMMEGKEVRFGIPGTALFAVSTTGTSTGAVNSAHDSLSPLGGGAVLLNMLLGEIAPGGVGTGLYGILVLALIAVFVGGLLVGRTPEYLGKKLRQREITLAALSVLVMPALVLIGTGITVILSSTTGYQGNSGDPGSPGSIHGFSEVLYAFASASNNNGSAFGGLTVTSDWFQTALGLCMLFGRFLPIIFVLALAGSLASQKKTAAGTGTLPTAGPMFTGLLTGTVVLVAALTFFPALALGPIAEALQ</sequence>
<name>KDPA_RHOOB</name>
<accession>C1AUJ4</accession>
<protein>
    <recommendedName>
        <fullName evidence="1">Potassium-transporting ATPase potassium-binding subunit</fullName>
    </recommendedName>
    <alternativeName>
        <fullName evidence="1">ATP phosphohydrolase [potassium-transporting] A chain</fullName>
    </alternativeName>
    <alternativeName>
        <fullName evidence="1">Potassium-binding and translocating subunit A</fullName>
    </alternativeName>
    <alternativeName>
        <fullName evidence="1">Potassium-translocating ATPase A chain</fullName>
    </alternativeName>
</protein>
<comment type="function">
    <text evidence="1">Part of the high-affinity ATP-driven potassium transport (or Kdp) system, which catalyzes the hydrolysis of ATP coupled with the electrogenic transport of potassium into the cytoplasm. This subunit binds the extracellular potassium ions and delivers the ions to the membrane domain of KdpB through an intramembrane tunnel.</text>
</comment>
<comment type="subunit">
    <text evidence="1">The system is composed of three essential subunits: KdpA, KdpB and KdpC.</text>
</comment>
<comment type="subcellular location">
    <subcellularLocation>
        <location evidence="1">Cell membrane</location>
        <topology evidence="1">Multi-pass membrane protein</topology>
    </subcellularLocation>
</comment>
<comment type="similarity">
    <text evidence="1">Belongs to the KdpA family.</text>
</comment>
<dbReference type="EMBL" id="AP011115">
    <property type="protein sequence ID" value="BAH49202.1"/>
    <property type="molecule type" value="Genomic_DNA"/>
</dbReference>
<dbReference type="RefSeq" id="WP_012688190.1">
    <property type="nucleotide sequence ID" value="NC_012522.1"/>
</dbReference>
<dbReference type="SMR" id="C1AUJ4"/>
<dbReference type="STRING" id="632772.ROP_09550"/>
<dbReference type="KEGG" id="rop:ROP_09550"/>
<dbReference type="PATRIC" id="fig|632772.20.peg.1018"/>
<dbReference type="HOGENOM" id="CLU_018614_3_0_11"/>
<dbReference type="OrthoDB" id="9763796at2"/>
<dbReference type="Proteomes" id="UP000002212">
    <property type="component" value="Chromosome"/>
</dbReference>
<dbReference type="GO" id="GO:0005886">
    <property type="term" value="C:plasma membrane"/>
    <property type="evidence" value="ECO:0007669"/>
    <property type="project" value="UniProtKB-SubCell"/>
</dbReference>
<dbReference type="GO" id="GO:0008556">
    <property type="term" value="F:P-type potassium transmembrane transporter activity"/>
    <property type="evidence" value="ECO:0007669"/>
    <property type="project" value="InterPro"/>
</dbReference>
<dbReference type="GO" id="GO:0030955">
    <property type="term" value="F:potassium ion binding"/>
    <property type="evidence" value="ECO:0007669"/>
    <property type="project" value="UniProtKB-UniRule"/>
</dbReference>
<dbReference type="HAMAP" id="MF_00275">
    <property type="entry name" value="KdpA"/>
    <property type="match status" value="1"/>
</dbReference>
<dbReference type="InterPro" id="IPR004623">
    <property type="entry name" value="KdpA"/>
</dbReference>
<dbReference type="NCBIfam" id="TIGR00680">
    <property type="entry name" value="kdpA"/>
    <property type="match status" value="1"/>
</dbReference>
<dbReference type="PANTHER" id="PTHR30607">
    <property type="entry name" value="POTASSIUM-TRANSPORTING ATPASE A CHAIN"/>
    <property type="match status" value="1"/>
</dbReference>
<dbReference type="PANTHER" id="PTHR30607:SF2">
    <property type="entry name" value="POTASSIUM-TRANSPORTING ATPASE POTASSIUM-BINDING SUBUNIT"/>
    <property type="match status" value="1"/>
</dbReference>
<dbReference type="Pfam" id="PF03814">
    <property type="entry name" value="KdpA"/>
    <property type="match status" value="1"/>
</dbReference>
<dbReference type="PIRSF" id="PIRSF001294">
    <property type="entry name" value="K_ATPaseA"/>
    <property type="match status" value="1"/>
</dbReference>